<dbReference type="EC" id="3.5.4.2" evidence="1"/>
<dbReference type="EMBL" id="CP001185">
    <property type="protein sequence ID" value="ACJ74536.1"/>
    <property type="molecule type" value="Genomic_DNA"/>
</dbReference>
<dbReference type="RefSeq" id="WP_004103343.1">
    <property type="nucleotide sequence ID" value="NC_011653.1"/>
</dbReference>
<dbReference type="SMR" id="B7IEM2"/>
<dbReference type="STRING" id="484019.THA_28"/>
<dbReference type="KEGG" id="taf:THA_28"/>
<dbReference type="eggNOG" id="COG1001">
    <property type="taxonomic scope" value="Bacteria"/>
</dbReference>
<dbReference type="HOGENOM" id="CLU_027935_0_0_0"/>
<dbReference type="OrthoDB" id="9775607at2"/>
<dbReference type="Proteomes" id="UP000002453">
    <property type="component" value="Chromosome"/>
</dbReference>
<dbReference type="GO" id="GO:0000034">
    <property type="term" value="F:adenine deaminase activity"/>
    <property type="evidence" value="ECO:0007669"/>
    <property type="project" value="UniProtKB-UniRule"/>
</dbReference>
<dbReference type="GO" id="GO:0006146">
    <property type="term" value="P:adenine catabolic process"/>
    <property type="evidence" value="ECO:0007669"/>
    <property type="project" value="InterPro"/>
</dbReference>
<dbReference type="CDD" id="cd01295">
    <property type="entry name" value="AdeC"/>
    <property type="match status" value="1"/>
</dbReference>
<dbReference type="FunFam" id="3.20.20.140:FF:000016">
    <property type="entry name" value="Adenine deaminase"/>
    <property type="match status" value="1"/>
</dbReference>
<dbReference type="Gene3D" id="3.20.20.140">
    <property type="entry name" value="Metal-dependent hydrolases"/>
    <property type="match status" value="1"/>
</dbReference>
<dbReference type="Gene3D" id="2.30.40.10">
    <property type="entry name" value="Urease, subunit C, domain 1"/>
    <property type="match status" value="1"/>
</dbReference>
<dbReference type="HAMAP" id="MF_01518">
    <property type="entry name" value="Adenine_deamin"/>
    <property type="match status" value="1"/>
</dbReference>
<dbReference type="InterPro" id="IPR006679">
    <property type="entry name" value="Adenine_deam"/>
</dbReference>
<dbReference type="InterPro" id="IPR026912">
    <property type="entry name" value="Adenine_deam_C"/>
</dbReference>
<dbReference type="InterPro" id="IPR006680">
    <property type="entry name" value="Amidohydro-rel"/>
</dbReference>
<dbReference type="InterPro" id="IPR011059">
    <property type="entry name" value="Metal-dep_hydrolase_composite"/>
</dbReference>
<dbReference type="InterPro" id="IPR032466">
    <property type="entry name" value="Metal_Hydrolase"/>
</dbReference>
<dbReference type="NCBIfam" id="TIGR01178">
    <property type="entry name" value="ade"/>
    <property type="match status" value="1"/>
</dbReference>
<dbReference type="PANTHER" id="PTHR11113:SF2">
    <property type="entry name" value="ADENINE DEAMINASE"/>
    <property type="match status" value="1"/>
</dbReference>
<dbReference type="PANTHER" id="PTHR11113">
    <property type="entry name" value="N-ACETYLGLUCOSAMINE-6-PHOSPHATE DEACETYLASE"/>
    <property type="match status" value="1"/>
</dbReference>
<dbReference type="Pfam" id="PF13382">
    <property type="entry name" value="Adenine_deam_C"/>
    <property type="match status" value="1"/>
</dbReference>
<dbReference type="Pfam" id="PF01979">
    <property type="entry name" value="Amidohydro_1"/>
    <property type="match status" value="1"/>
</dbReference>
<dbReference type="SUPFAM" id="SSF51338">
    <property type="entry name" value="Composite domain of metallo-dependent hydrolases"/>
    <property type="match status" value="1"/>
</dbReference>
<dbReference type="SUPFAM" id="SSF51556">
    <property type="entry name" value="Metallo-dependent hydrolases"/>
    <property type="match status" value="1"/>
</dbReference>
<gene>
    <name evidence="1" type="primary">ade</name>
    <name type="ordered locus">THA_28</name>
</gene>
<feature type="chain" id="PRO_1000146246" description="Adenine deaminase">
    <location>
        <begin position="1"/>
        <end position="574"/>
    </location>
</feature>
<comment type="catalytic activity">
    <reaction evidence="1">
        <text>adenine + H2O + H(+) = hypoxanthine + NH4(+)</text>
        <dbReference type="Rhea" id="RHEA:23688"/>
        <dbReference type="ChEBI" id="CHEBI:15377"/>
        <dbReference type="ChEBI" id="CHEBI:15378"/>
        <dbReference type="ChEBI" id="CHEBI:16708"/>
        <dbReference type="ChEBI" id="CHEBI:17368"/>
        <dbReference type="ChEBI" id="CHEBI:28938"/>
        <dbReference type="EC" id="3.5.4.2"/>
    </reaction>
</comment>
<comment type="cofactor">
    <cofactor evidence="1">
        <name>Mn(2+)</name>
        <dbReference type="ChEBI" id="CHEBI:29035"/>
    </cofactor>
</comment>
<comment type="similarity">
    <text evidence="1">Belongs to the metallo-dependent hydrolases superfamily. Adenine deaminase family.</text>
</comment>
<organism>
    <name type="scientific">Thermosipho africanus (strain TCF52B)</name>
    <dbReference type="NCBI Taxonomy" id="484019"/>
    <lineage>
        <taxon>Bacteria</taxon>
        <taxon>Thermotogati</taxon>
        <taxon>Thermotogota</taxon>
        <taxon>Thermotogae</taxon>
        <taxon>Thermotogales</taxon>
        <taxon>Fervidobacteriaceae</taxon>
        <taxon>Thermosipho</taxon>
    </lineage>
</organism>
<proteinExistence type="inferred from homology"/>
<name>ADEC_THEAB</name>
<sequence length="574" mass="63466">MKIYEIVPVALGKKMPDVLIKNVNLVNVFTGKIEKTNIALYKKRIAGIGDDYKVGKEVIDAKGLFAIPGLIDAHVHIESSMLSPTEFAKLILPFGTTTIIADPHEIANVLGVEGIEYMIKSTEGIPLNVYFAIPSAVPATNLETSGATLGAEDMVSLVEKYPFRIIALGEVMNYPGVLDCDRDLITKIEILRHKYKKIDGHAPGLTGKELNAYIDAFVRSDHECETKEEALEKLSKGMQIFIREGTAARNLNALLPAVNEMNHFFFSFCTDDRDPNDIIERGHINGIIKSAIDSGIDPIIAIRMATINTAKYFNLRSMGAISPGYKADIVFIDNLKDFNIKFVIKDSKIVVEDKRINMNVESIIRNIPNTLGKINIVKNYSLSIKNRNRKIRVISVKSGTLLTDELIVEPNVEKGYVVSDIDRDIIKIAVFDRHKASGYSIGFVHGLSIKNGAVATTIGHDSHNLTVVGTNDEDMNYAISRIKELNGGIVVVKNKKLIASLSLPIAGLMSDKNYGFVVEELRKLKNSLVEIGVNSDILMQIHFLQLAVIPKLKITDKGLIDVEKQKIVDLFVEV</sequence>
<protein>
    <recommendedName>
        <fullName evidence="1">Adenine deaminase</fullName>
        <shortName evidence="1">Adenase</shortName>
        <shortName evidence="1">Adenine aminase</shortName>
        <ecNumber evidence="1">3.5.4.2</ecNumber>
    </recommendedName>
</protein>
<keyword id="KW-0378">Hydrolase</keyword>
<keyword id="KW-0464">Manganese</keyword>
<keyword id="KW-1185">Reference proteome</keyword>
<accession>B7IEM2</accession>
<evidence type="ECO:0000255" key="1">
    <source>
        <dbReference type="HAMAP-Rule" id="MF_01518"/>
    </source>
</evidence>
<reference key="1">
    <citation type="journal article" date="2009" name="J. Bacteriol.">
        <title>The genome of Thermosipho africanus TCF52B: lateral genetic connections to the Firmicutes and Archaea.</title>
        <authorList>
            <person name="Nesboe C.L."/>
            <person name="Bapteste E."/>
            <person name="Curtis B."/>
            <person name="Dahle H."/>
            <person name="Lopez P."/>
            <person name="Macleod D."/>
            <person name="Dlutek M."/>
            <person name="Bowman S."/>
            <person name="Zhaxybayeva O."/>
            <person name="Birkeland N.-K."/>
            <person name="Doolittle W.F."/>
        </authorList>
    </citation>
    <scope>NUCLEOTIDE SEQUENCE [LARGE SCALE GENOMIC DNA]</scope>
    <source>
        <strain>TCF52B</strain>
    </source>
</reference>